<organism>
    <name type="scientific">Mus musculus</name>
    <name type="common">Mouse</name>
    <dbReference type="NCBI Taxonomy" id="10090"/>
    <lineage>
        <taxon>Eukaryota</taxon>
        <taxon>Metazoa</taxon>
        <taxon>Chordata</taxon>
        <taxon>Craniata</taxon>
        <taxon>Vertebrata</taxon>
        <taxon>Euteleostomi</taxon>
        <taxon>Mammalia</taxon>
        <taxon>Eutheria</taxon>
        <taxon>Euarchontoglires</taxon>
        <taxon>Glires</taxon>
        <taxon>Rodentia</taxon>
        <taxon>Myomorpha</taxon>
        <taxon>Muroidea</taxon>
        <taxon>Muridae</taxon>
        <taxon>Murinae</taxon>
        <taxon>Mus</taxon>
        <taxon>Mus</taxon>
    </lineage>
</organism>
<keyword id="KW-0272">Extracellular matrix</keyword>
<keyword id="KW-0325">Glycoprotein</keyword>
<keyword id="KW-1185">Reference proteome</keyword>
<keyword id="KW-0964">Secreted</keyword>
<keyword id="KW-0732">Signal</keyword>
<feature type="signal peptide" evidence="2">
    <location>
        <begin position="1"/>
        <end position="38"/>
    </location>
</feature>
<feature type="chain" id="PRO_0000418888" description="Inactive heparanase-2">
    <location>
        <begin position="39"/>
        <end position="592"/>
    </location>
</feature>
<feature type="glycosylation site" description="N-linked (GlcNAc...) asparagine" evidence="2">
    <location>
        <position position="254"/>
    </location>
</feature>
<feature type="glycosylation site" description="N-linked (GlcNAc...) asparagine" evidence="2">
    <location>
        <position position="392"/>
    </location>
</feature>
<gene>
    <name type="primary">Hpse2</name>
    <name type="synonym">Hpa2</name>
</gene>
<proteinExistence type="evidence at transcript level"/>
<accession>B2RY83</accession>
<protein>
    <recommendedName>
        <fullName>Inactive heparanase-2</fullName>
        <shortName>Hpa2</shortName>
    </recommendedName>
</protein>
<reference key="1">
    <citation type="journal article" date="2009" name="PLoS Biol.">
        <title>Lineage-specific biology revealed by a finished genome assembly of the mouse.</title>
        <authorList>
            <person name="Church D.M."/>
            <person name="Goodstadt L."/>
            <person name="Hillier L.W."/>
            <person name="Zody M.C."/>
            <person name="Goldstein S."/>
            <person name="She X."/>
            <person name="Bult C.J."/>
            <person name="Agarwala R."/>
            <person name="Cherry J.L."/>
            <person name="DiCuccio M."/>
            <person name="Hlavina W."/>
            <person name="Kapustin Y."/>
            <person name="Meric P."/>
            <person name="Maglott D."/>
            <person name="Birtle Z."/>
            <person name="Marques A.C."/>
            <person name="Graves T."/>
            <person name="Zhou S."/>
            <person name="Teague B."/>
            <person name="Potamousis K."/>
            <person name="Churas C."/>
            <person name="Place M."/>
            <person name="Herschleb J."/>
            <person name="Runnheim R."/>
            <person name="Forrest D."/>
            <person name="Amos-Landgraf J."/>
            <person name="Schwartz D.C."/>
            <person name="Cheng Z."/>
            <person name="Lindblad-Toh K."/>
            <person name="Eichler E.E."/>
            <person name="Ponting C.P."/>
        </authorList>
    </citation>
    <scope>NUCLEOTIDE SEQUENCE [LARGE SCALE GENOMIC DNA]</scope>
    <source>
        <strain>C57BL/6J</strain>
    </source>
</reference>
<reference key="2">
    <citation type="journal article" date="2004" name="Genome Res.">
        <title>The status, quality, and expansion of the NIH full-length cDNA project: the Mammalian Gene Collection (MGC).</title>
        <authorList>
            <consortium name="The MGC Project Team"/>
        </authorList>
    </citation>
    <scope>NUCLEOTIDE SEQUENCE [LARGE SCALE MRNA]</scope>
    <source>
        <tissue>Brain</tissue>
    </source>
</reference>
<evidence type="ECO:0000250" key="1"/>
<evidence type="ECO:0000255" key="2"/>
<evidence type="ECO:0000305" key="3"/>
<sequence>MRVLCAFPEAMASSSSRPPSCLALVALFLALLLHLSLSFHAGNRRPLPVDRATGLKEKTLILLDVSTKNPVRTVNENFLSLQLDPSIIHDGWLDFLSSKRLVTLARGLSPAFLRFGGKRTDFLQFQNLRNPAKSRGGPGPDYYLKNYEDDIVRSDVALDKQKGCKIAQHPDVMLELQREKASQMHLVLLKEQYSNTYSNLILTARSLDKLYNFADCSGLHLIFALNALRRNPNNSWNSSSALSLLKYSASKKYNISWELGNEPNNYRSIHGRAVNGSQLGKDYIQLKSLLQPIRVYSRASLYGPNIGRPRKNVIALLDGFMKVAGSTVDAVTWQHCYIDGRVVKVMDFLKTRLLDTLSDQIRKIQKVVNTYTPGKKIWLEGVVTTSAGGTNNLSDSYAAGFLWLNTLGMLANQGIDVVIRHSFFDHGYNHLVDQNFNPLPDYWLSLLYKRLIGPKVLAVHVAGLQRKPRPGRVIRDKLRIYAHCTNHHNHNYVRGSITLFIINLHRSRKKIKLAGTLRDKLVHQYLLQPYGQEGLKSKSVQLNGQPLVMVDDGTLPELKPRPLRAGRTLVIPPVTMGFYVVKNVNALACRYR</sequence>
<name>HPSE2_MOUSE</name>
<comment type="function">
    <text evidence="1">Binds heparin and heparan sulfate with high affinity, but lacks heparanase activity. Inhibits HPSE, possibly by competing for its substrates (in vitro) (By similarity).</text>
</comment>
<comment type="subunit">
    <text evidence="1">Interacts with HPSE. Interacts with SDC1 (via glycan chains) (By similarity).</text>
</comment>
<comment type="subcellular location">
    <subcellularLocation>
        <location evidence="1">Secreted</location>
        <location evidence="1">Extracellular space</location>
        <location evidence="1">Extracellular matrix</location>
    </subcellularLocation>
</comment>
<comment type="similarity">
    <text evidence="3">Belongs to the glycosyl hydrolase 79 family.</text>
</comment>
<dbReference type="EMBL" id="AC122312">
    <property type="status" value="NOT_ANNOTATED_CDS"/>
    <property type="molecule type" value="Genomic_DNA"/>
</dbReference>
<dbReference type="EMBL" id="AC124716">
    <property type="status" value="NOT_ANNOTATED_CDS"/>
    <property type="molecule type" value="Genomic_DNA"/>
</dbReference>
<dbReference type="EMBL" id="AC125458">
    <property type="status" value="NOT_ANNOTATED_CDS"/>
    <property type="molecule type" value="Genomic_DNA"/>
</dbReference>
<dbReference type="EMBL" id="AC126795">
    <property type="status" value="NOT_ANNOTATED_CDS"/>
    <property type="molecule type" value="Genomic_DNA"/>
</dbReference>
<dbReference type="EMBL" id="AC140375">
    <property type="status" value="NOT_ANNOTATED_CDS"/>
    <property type="molecule type" value="Genomic_DNA"/>
</dbReference>
<dbReference type="EMBL" id="BC158131">
    <property type="protein sequence ID" value="AAI58132.1"/>
    <property type="molecule type" value="mRNA"/>
</dbReference>
<dbReference type="EMBL" id="BC158133">
    <property type="protein sequence ID" value="AAI58134.1"/>
    <property type="molecule type" value="mRNA"/>
</dbReference>
<dbReference type="EMBL" id="BC158136">
    <property type="protein sequence ID" value="AAI58137.1"/>
    <property type="molecule type" value="mRNA"/>
</dbReference>
<dbReference type="CCDS" id="CCDS37993.1"/>
<dbReference type="RefSeq" id="NP_001074726.1">
    <property type="nucleotide sequence ID" value="NM_001081257.3"/>
</dbReference>
<dbReference type="SMR" id="B2RY83"/>
<dbReference type="BioGRID" id="244146">
    <property type="interactions" value="1"/>
</dbReference>
<dbReference type="FunCoup" id="B2RY83">
    <property type="interactions" value="100"/>
</dbReference>
<dbReference type="STRING" id="10090.ENSMUSP00000097026"/>
<dbReference type="CAZy" id="GH79">
    <property type="family name" value="Glycoside Hydrolase Family 79"/>
</dbReference>
<dbReference type="GlyCosmos" id="B2RY83">
    <property type="glycosylation" value="2 sites, No reported glycans"/>
</dbReference>
<dbReference type="GlyGen" id="B2RY83">
    <property type="glycosylation" value="2 sites"/>
</dbReference>
<dbReference type="iPTMnet" id="B2RY83"/>
<dbReference type="PhosphoSitePlus" id="B2RY83"/>
<dbReference type="PaxDb" id="10090-ENSMUSP00000097026"/>
<dbReference type="ProteomicsDB" id="273273"/>
<dbReference type="Antibodypedia" id="45898">
    <property type="antibodies" value="179 antibodies from 29 providers"/>
</dbReference>
<dbReference type="Ensembl" id="ENSMUST00000099428.5">
    <property type="protein sequence ID" value="ENSMUSP00000097026.4"/>
    <property type="gene ID" value="ENSMUSG00000074852.5"/>
</dbReference>
<dbReference type="GeneID" id="545291"/>
<dbReference type="KEGG" id="mmu:545291"/>
<dbReference type="UCSC" id="uc008hoe.2">
    <property type="organism name" value="mouse"/>
</dbReference>
<dbReference type="AGR" id="MGI:2685814"/>
<dbReference type="CTD" id="60495"/>
<dbReference type="MGI" id="MGI:2685814">
    <property type="gene designation" value="Hpse2"/>
</dbReference>
<dbReference type="VEuPathDB" id="HostDB:ENSMUSG00000074852"/>
<dbReference type="eggNOG" id="ENOG502QQST">
    <property type="taxonomic scope" value="Eukaryota"/>
</dbReference>
<dbReference type="GeneTree" id="ENSGT00390000004874"/>
<dbReference type="HOGENOM" id="CLU_021823_0_1_1"/>
<dbReference type="InParanoid" id="B2RY83"/>
<dbReference type="OMA" id="YMRGSIT"/>
<dbReference type="OrthoDB" id="726732at2759"/>
<dbReference type="PhylomeDB" id="B2RY83"/>
<dbReference type="TreeFam" id="TF328999"/>
<dbReference type="Reactome" id="R-MMU-2024096">
    <property type="pathway name" value="HS-GAG degradation"/>
</dbReference>
<dbReference type="BioGRID-ORCS" id="545291">
    <property type="hits" value="0 hits in 75 CRISPR screens"/>
</dbReference>
<dbReference type="ChiTaRS" id="Hpse2">
    <property type="organism name" value="mouse"/>
</dbReference>
<dbReference type="PRO" id="PR:B2RY83"/>
<dbReference type="Proteomes" id="UP000000589">
    <property type="component" value="Chromosome 19"/>
</dbReference>
<dbReference type="RNAct" id="B2RY83">
    <property type="molecule type" value="protein"/>
</dbReference>
<dbReference type="Bgee" id="ENSMUSG00000074852">
    <property type="expression patterns" value="Expressed in undifferentiated genital tubercle and 41 other cell types or tissues"/>
</dbReference>
<dbReference type="GO" id="GO:0031012">
    <property type="term" value="C:extracellular matrix"/>
    <property type="evidence" value="ECO:0007669"/>
    <property type="project" value="Ensembl"/>
</dbReference>
<dbReference type="GO" id="GO:0005576">
    <property type="term" value="C:extracellular region"/>
    <property type="evidence" value="ECO:0007669"/>
    <property type="project" value="UniProtKB-KW"/>
</dbReference>
<dbReference type="GO" id="GO:0016020">
    <property type="term" value="C:membrane"/>
    <property type="evidence" value="ECO:0007669"/>
    <property type="project" value="InterPro"/>
</dbReference>
<dbReference type="GO" id="GO:0043395">
    <property type="term" value="F:heparan sulfate proteoglycan binding"/>
    <property type="evidence" value="ECO:0007669"/>
    <property type="project" value="Ensembl"/>
</dbReference>
<dbReference type="GO" id="GO:0016798">
    <property type="term" value="F:hydrolase activity, acting on glycosyl bonds"/>
    <property type="evidence" value="ECO:0007669"/>
    <property type="project" value="InterPro"/>
</dbReference>
<dbReference type="GO" id="GO:0008283">
    <property type="term" value="P:cell population proliferation"/>
    <property type="evidence" value="ECO:0000315"/>
    <property type="project" value="MGI"/>
</dbReference>
<dbReference type="GO" id="GO:0030198">
    <property type="term" value="P:extracellular matrix organization"/>
    <property type="evidence" value="ECO:0000315"/>
    <property type="project" value="MGI"/>
</dbReference>
<dbReference type="GO" id="GO:0008284">
    <property type="term" value="P:positive regulation of cell population proliferation"/>
    <property type="evidence" value="ECO:0000315"/>
    <property type="project" value="MGI"/>
</dbReference>
<dbReference type="Gene3D" id="3.20.20.80">
    <property type="entry name" value="Glycosidases"/>
    <property type="match status" value="1"/>
</dbReference>
<dbReference type="InterPro" id="IPR005199">
    <property type="entry name" value="Glyco_hydro_79"/>
</dbReference>
<dbReference type="InterPro" id="IPR017853">
    <property type="entry name" value="Glycoside_hydrolase_SF"/>
</dbReference>
<dbReference type="PANTHER" id="PTHR46145">
    <property type="entry name" value="HEPARANASE"/>
    <property type="match status" value="1"/>
</dbReference>
<dbReference type="PANTHER" id="PTHR46145:SF1">
    <property type="entry name" value="INACTIVE HEPARANASE-2"/>
    <property type="match status" value="1"/>
</dbReference>
<dbReference type="Pfam" id="PF03662">
    <property type="entry name" value="Glyco_hydro_79n"/>
    <property type="match status" value="1"/>
</dbReference>
<dbReference type="SUPFAM" id="SSF51445">
    <property type="entry name" value="(Trans)glycosidases"/>
    <property type="match status" value="1"/>
</dbReference>